<comment type="function">
    <text evidence="1">Catalyzes the attachment of isoleucine to tRNA(Ile). As IleRS can inadvertently accommodate and process structurally similar amino acids such as valine, to avoid such errors it has two additional distinct tRNA(Ile)-dependent editing activities. One activity is designated as 'pretransfer' editing and involves the hydrolysis of activated Val-AMP. The other activity is designated 'posttransfer' editing and involves deacylation of mischarged Val-tRNA(Ile).</text>
</comment>
<comment type="catalytic activity">
    <reaction evidence="1">
        <text>tRNA(Ile) + L-isoleucine + ATP = L-isoleucyl-tRNA(Ile) + AMP + diphosphate</text>
        <dbReference type="Rhea" id="RHEA:11060"/>
        <dbReference type="Rhea" id="RHEA-COMP:9666"/>
        <dbReference type="Rhea" id="RHEA-COMP:9695"/>
        <dbReference type="ChEBI" id="CHEBI:30616"/>
        <dbReference type="ChEBI" id="CHEBI:33019"/>
        <dbReference type="ChEBI" id="CHEBI:58045"/>
        <dbReference type="ChEBI" id="CHEBI:78442"/>
        <dbReference type="ChEBI" id="CHEBI:78528"/>
        <dbReference type="ChEBI" id="CHEBI:456215"/>
        <dbReference type="EC" id="6.1.1.5"/>
    </reaction>
</comment>
<comment type="cofactor">
    <cofactor evidence="1">
        <name>Zn(2+)</name>
        <dbReference type="ChEBI" id="CHEBI:29105"/>
    </cofactor>
    <text evidence="1">Binds 1 zinc ion per subunit.</text>
</comment>
<comment type="subunit">
    <text evidence="1">Monomer.</text>
</comment>
<comment type="subcellular location">
    <subcellularLocation>
        <location evidence="1">Cytoplasm</location>
    </subcellularLocation>
</comment>
<comment type="domain">
    <text evidence="1">IleRS has two distinct active sites: one for aminoacylation and one for editing. The misactivated valine is translocated from the active site to the editing site, which sterically excludes the correctly activated isoleucine. The single editing site contains two valyl binding pockets, one specific for each substrate (Val-AMP or Val-tRNA(Ile)).</text>
</comment>
<comment type="similarity">
    <text evidence="1">Belongs to the class-I aminoacyl-tRNA synthetase family. IleS type 1 subfamily.</text>
</comment>
<feature type="chain" id="PRO_0000098394" description="Isoleucine--tRNA ligase">
    <location>
        <begin position="1"/>
        <end position="935"/>
    </location>
</feature>
<feature type="short sequence motif" description="'HIGH' region">
    <location>
        <begin position="58"/>
        <end position="68"/>
    </location>
</feature>
<feature type="short sequence motif" description="'KMSKS' region">
    <location>
        <begin position="600"/>
        <end position="604"/>
    </location>
</feature>
<feature type="binding site" evidence="1">
    <location>
        <position position="559"/>
    </location>
    <ligand>
        <name>L-isoleucyl-5'-AMP</name>
        <dbReference type="ChEBI" id="CHEBI:178002"/>
    </ligand>
</feature>
<feature type="binding site" evidence="1">
    <location>
        <position position="603"/>
    </location>
    <ligand>
        <name>ATP</name>
        <dbReference type="ChEBI" id="CHEBI:30616"/>
    </ligand>
</feature>
<feature type="binding site" evidence="1">
    <location>
        <position position="898"/>
    </location>
    <ligand>
        <name>Zn(2+)</name>
        <dbReference type="ChEBI" id="CHEBI:29105"/>
    </ligand>
</feature>
<feature type="binding site" evidence="1">
    <location>
        <position position="901"/>
    </location>
    <ligand>
        <name>Zn(2+)</name>
        <dbReference type="ChEBI" id="CHEBI:29105"/>
    </ligand>
</feature>
<feature type="binding site" evidence="1">
    <location>
        <position position="918"/>
    </location>
    <ligand>
        <name>Zn(2+)</name>
        <dbReference type="ChEBI" id="CHEBI:29105"/>
    </ligand>
</feature>
<feature type="binding site" evidence="1">
    <location>
        <position position="921"/>
    </location>
    <ligand>
        <name>Zn(2+)</name>
        <dbReference type="ChEBI" id="CHEBI:29105"/>
    </ligand>
</feature>
<reference key="1">
    <citation type="submission" date="2003-06" db="EMBL/GenBank/DDBJ databases">
        <title>The complete genome sequence of Haemophilus ducreyi.</title>
        <authorList>
            <person name="Munson R.S. Jr."/>
            <person name="Ray W.C."/>
            <person name="Mahairas G."/>
            <person name="Sabo P."/>
            <person name="Mungur R."/>
            <person name="Johnson L."/>
            <person name="Nguyen D."/>
            <person name="Wang J."/>
            <person name="Forst C."/>
            <person name="Hood L."/>
        </authorList>
    </citation>
    <scope>NUCLEOTIDE SEQUENCE [LARGE SCALE GENOMIC DNA]</scope>
    <source>
        <strain>35000HP / ATCC 700724</strain>
    </source>
</reference>
<name>SYI_HAEDU</name>
<organism>
    <name type="scientific">Haemophilus ducreyi (strain 35000HP / ATCC 700724)</name>
    <dbReference type="NCBI Taxonomy" id="233412"/>
    <lineage>
        <taxon>Bacteria</taxon>
        <taxon>Pseudomonadati</taxon>
        <taxon>Pseudomonadota</taxon>
        <taxon>Gammaproteobacteria</taxon>
        <taxon>Pasteurellales</taxon>
        <taxon>Pasteurellaceae</taxon>
        <taxon>Haemophilus</taxon>
    </lineage>
</organism>
<protein>
    <recommendedName>
        <fullName evidence="1">Isoleucine--tRNA ligase</fullName>
        <ecNumber evidence="1">6.1.1.5</ecNumber>
    </recommendedName>
    <alternativeName>
        <fullName evidence="1">Isoleucyl-tRNA synthetase</fullName>
        <shortName evidence="1">IleRS</shortName>
    </alternativeName>
</protein>
<proteinExistence type="inferred from homology"/>
<gene>
    <name evidence="1" type="primary">ileS</name>
    <name type="ordered locus">HD_0272</name>
</gene>
<evidence type="ECO:0000255" key="1">
    <source>
        <dbReference type="HAMAP-Rule" id="MF_02002"/>
    </source>
</evidence>
<keyword id="KW-0030">Aminoacyl-tRNA synthetase</keyword>
<keyword id="KW-0067">ATP-binding</keyword>
<keyword id="KW-0963">Cytoplasm</keyword>
<keyword id="KW-0436">Ligase</keyword>
<keyword id="KW-0479">Metal-binding</keyword>
<keyword id="KW-0547">Nucleotide-binding</keyword>
<keyword id="KW-0648">Protein biosynthesis</keyword>
<keyword id="KW-1185">Reference proteome</keyword>
<keyword id="KW-0862">Zinc</keyword>
<dbReference type="EC" id="6.1.1.5" evidence="1"/>
<dbReference type="EMBL" id="AE017143">
    <property type="protein sequence ID" value="AAP95253.1"/>
    <property type="molecule type" value="Genomic_DNA"/>
</dbReference>
<dbReference type="RefSeq" id="WP_010944306.1">
    <property type="nucleotide sequence ID" value="NC_002940.2"/>
</dbReference>
<dbReference type="SMR" id="Q7VP34"/>
<dbReference type="STRING" id="233412.HD_0272"/>
<dbReference type="KEGG" id="hdu:HD_0272"/>
<dbReference type="eggNOG" id="COG0060">
    <property type="taxonomic scope" value="Bacteria"/>
</dbReference>
<dbReference type="HOGENOM" id="CLU_001493_7_0_6"/>
<dbReference type="OrthoDB" id="9810365at2"/>
<dbReference type="Proteomes" id="UP000001022">
    <property type="component" value="Chromosome"/>
</dbReference>
<dbReference type="GO" id="GO:0005829">
    <property type="term" value="C:cytosol"/>
    <property type="evidence" value="ECO:0007669"/>
    <property type="project" value="TreeGrafter"/>
</dbReference>
<dbReference type="GO" id="GO:0002161">
    <property type="term" value="F:aminoacyl-tRNA deacylase activity"/>
    <property type="evidence" value="ECO:0007669"/>
    <property type="project" value="InterPro"/>
</dbReference>
<dbReference type="GO" id="GO:0005524">
    <property type="term" value="F:ATP binding"/>
    <property type="evidence" value="ECO:0007669"/>
    <property type="project" value="UniProtKB-UniRule"/>
</dbReference>
<dbReference type="GO" id="GO:0004822">
    <property type="term" value="F:isoleucine-tRNA ligase activity"/>
    <property type="evidence" value="ECO:0007669"/>
    <property type="project" value="UniProtKB-UniRule"/>
</dbReference>
<dbReference type="GO" id="GO:0000049">
    <property type="term" value="F:tRNA binding"/>
    <property type="evidence" value="ECO:0007669"/>
    <property type="project" value="InterPro"/>
</dbReference>
<dbReference type="GO" id="GO:0008270">
    <property type="term" value="F:zinc ion binding"/>
    <property type="evidence" value="ECO:0007669"/>
    <property type="project" value="UniProtKB-UniRule"/>
</dbReference>
<dbReference type="GO" id="GO:0006428">
    <property type="term" value="P:isoleucyl-tRNA aminoacylation"/>
    <property type="evidence" value="ECO:0007669"/>
    <property type="project" value="UniProtKB-UniRule"/>
</dbReference>
<dbReference type="CDD" id="cd07960">
    <property type="entry name" value="Anticodon_Ia_Ile_BEm"/>
    <property type="match status" value="1"/>
</dbReference>
<dbReference type="CDD" id="cd00818">
    <property type="entry name" value="IleRS_core"/>
    <property type="match status" value="1"/>
</dbReference>
<dbReference type="FunFam" id="1.10.730.20:FF:000001">
    <property type="entry name" value="Isoleucine--tRNA ligase"/>
    <property type="match status" value="1"/>
</dbReference>
<dbReference type="FunFam" id="3.40.50.620:FF:000042">
    <property type="entry name" value="Isoleucine--tRNA ligase"/>
    <property type="match status" value="1"/>
</dbReference>
<dbReference type="FunFam" id="3.40.50.620:FF:000048">
    <property type="entry name" value="Isoleucine--tRNA ligase"/>
    <property type="match status" value="1"/>
</dbReference>
<dbReference type="Gene3D" id="1.10.730.20">
    <property type="match status" value="1"/>
</dbReference>
<dbReference type="Gene3D" id="3.40.50.620">
    <property type="entry name" value="HUPs"/>
    <property type="match status" value="2"/>
</dbReference>
<dbReference type="HAMAP" id="MF_02002">
    <property type="entry name" value="Ile_tRNA_synth_type1"/>
    <property type="match status" value="1"/>
</dbReference>
<dbReference type="InterPro" id="IPR001412">
    <property type="entry name" value="aa-tRNA-synth_I_CS"/>
</dbReference>
<dbReference type="InterPro" id="IPR002300">
    <property type="entry name" value="aa-tRNA-synth_Ia"/>
</dbReference>
<dbReference type="InterPro" id="IPR033708">
    <property type="entry name" value="Anticodon_Ile_BEm"/>
</dbReference>
<dbReference type="InterPro" id="IPR002301">
    <property type="entry name" value="Ile-tRNA-ligase"/>
</dbReference>
<dbReference type="InterPro" id="IPR023585">
    <property type="entry name" value="Ile-tRNA-ligase_type1"/>
</dbReference>
<dbReference type="InterPro" id="IPR050081">
    <property type="entry name" value="Ile-tRNA_ligase"/>
</dbReference>
<dbReference type="InterPro" id="IPR013155">
    <property type="entry name" value="M/V/L/I-tRNA-synth_anticd-bd"/>
</dbReference>
<dbReference type="InterPro" id="IPR014729">
    <property type="entry name" value="Rossmann-like_a/b/a_fold"/>
</dbReference>
<dbReference type="InterPro" id="IPR009080">
    <property type="entry name" value="tRNAsynth_Ia_anticodon-bd"/>
</dbReference>
<dbReference type="InterPro" id="IPR009008">
    <property type="entry name" value="Val/Leu/Ile-tRNA-synth_edit"/>
</dbReference>
<dbReference type="InterPro" id="IPR010663">
    <property type="entry name" value="Znf_FPG/IleRS"/>
</dbReference>
<dbReference type="NCBIfam" id="TIGR00392">
    <property type="entry name" value="ileS"/>
    <property type="match status" value="1"/>
</dbReference>
<dbReference type="PANTHER" id="PTHR42765:SF1">
    <property type="entry name" value="ISOLEUCINE--TRNA LIGASE, MITOCHONDRIAL"/>
    <property type="match status" value="1"/>
</dbReference>
<dbReference type="PANTHER" id="PTHR42765">
    <property type="entry name" value="SOLEUCYL-TRNA SYNTHETASE"/>
    <property type="match status" value="1"/>
</dbReference>
<dbReference type="Pfam" id="PF08264">
    <property type="entry name" value="Anticodon_1"/>
    <property type="match status" value="1"/>
</dbReference>
<dbReference type="Pfam" id="PF00133">
    <property type="entry name" value="tRNA-synt_1"/>
    <property type="match status" value="1"/>
</dbReference>
<dbReference type="Pfam" id="PF06827">
    <property type="entry name" value="zf-FPG_IleRS"/>
    <property type="match status" value="1"/>
</dbReference>
<dbReference type="PRINTS" id="PR00984">
    <property type="entry name" value="TRNASYNTHILE"/>
</dbReference>
<dbReference type="SUPFAM" id="SSF47323">
    <property type="entry name" value="Anticodon-binding domain of a subclass of class I aminoacyl-tRNA synthetases"/>
    <property type="match status" value="1"/>
</dbReference>
<dbReference type="SUPFAM" id="SSF52374">
    <property type="entry name" value="Nucleotidylyl transferase"/>
    <property type="match status" value="1"/>
</dbReference>
<dbReference type="SUPFAM" id="SSF50677">
    <property type="entry name" value="ValRS/IleRS/LeuRS editing domain"/>
    <property type="match status" value="1"/>
</dbReference>
<dbReference type="PROSITE" id="PS00178">
    <property type="entry name" value="AA_TRNA_LIGASE_I"/>
    <property type="match status" value="1"/>
</dbReference>
<accession>Q7VP34</accession>
<sequence>MTDYKDTLNLPETGFPMRGDLAKREPAMLKNWYDKNLYQQIRQTSKGKKTFILHDGPPYANGNLHLGHAVNKILKDIIMKSKTASGFDTPYVPGWDCHGLPIELKVESIVGKPNEKISAAEFRQACREYANEQVDRQKADFIRMGVLGDWDNPYLTMNFNTEASIIRTLAKVIANGHLYKGSKPVHWCLDCGSSLAEAEVEYEDKVSPSIYVRFKACDETAIETLFNAKGNGPISAIIWTTTPWTMPSNRAIAIHPELEYALVQLADERVILATELVESVAKAIEAESFDILATVKGETLQLLRFHHPFYAFDVPFIFGDHVTTEGGTGLVHTAPDHGTDDFIIARKNNIEMAGLIGNDGKFKSDVEFFAGLAVFESNEKVIEKLKETGALLKLARIKHSYPHCWRHKTPIIFRATPQWFIGMEKQGLRAQALAEIKTVRWIPNWGEARIDTMVANRPDWCISRQRTWGVPMAMFVHNETEELHPRTLDILELVAQRVEQQGIQAWWDLDPTEVLGEDAQHYHKVPDTLDVWFDSGSTYASVVEQRPEFNGQTADMYLEGSDQHRGWFMSSLMLASATNGKAPYQQVLTHGFVVDEKGRKMSKSIGNVIVPSEVWNKNGADILRLWVASTDYTAEMKVSHGILNSAGDAYRRIRNTARFLLSNLNGFIPARDEVKPNEMIALDRWAVSCALEAQNDIIEAYEHYQFHTVVQRLMRFCSIEMGSFYLDIIKDRQYTTKADSLARRSCQTALWHIAEALVRWIAPILSFTADEIWSHLPTVEGRSEFVFTEQFYSQLFTLNCHDKLDDNYWQQLINIRAEVNRVLEQARNEKTIGAGLEAKVTVYANDEMLPLLHQLGNELRFVLITSQAIVKPLSEADVAEGELAGLAVKVERAEGEKCPRCWHFATDIGTHAEHNAICGRCVENVAGKGEVRRFA</sequence>